<keyword id="KW-0067">ATP-binding</keyword>
<keyword id="KW-0963">Cytoplasm</keyword>
<keyword id="KW-0418">Kinase</keyword>
<keyword id="KW-0545">Nucleotide biosynthesis</keyword>
<keyword id="KW-0547">Nucleotide-binding</keyword>
<keyword id="KW-0808">Transferase</keyword>
<name>KAD_NEIGO</name>
<accession>P49979</accession>
<evidence type="ECO:0000255" key="1">
    <source>
        <dbReference type="HAMAP-Rule" id="MF_00235"/>
    </source>
</evidence>
<gene>
    <name evidence="1" type="primary">adk</name>
</gene>
<dbReference type="EC" id="2.7.4.3" evidence="1"/>
<dbReference type="EMBL" id="L36471">
    <property type="protein sequence ID" value="AAA99174.1"/>
    <property type="molecule type" value="Genomic_DNA"/>
</dbReference>
<dbReference type="PIR" id="S61843">
    <property type="entry name" value="S61843"/>
</dbReference>
<dbReference type="RefSeq" id="WP_003687832.1">
    <property type="nucleotide sequence ID" value="NZ_WHPL01000002.1"/>
</dbReference>
<dbReference type="SMR" id="P49979"/>
<dbReference type="GeneID" id="66752738"/>
<dbReference type="OMA" id="VYHEQTA"/>
<dbReference type="UniPathway" id="UPA00588">
    <property type="reaction ID" value="UER00649"/>
</dbReference>
<dbReference type="GO" id="GO:0005737">
    <property type="term" value="C:cytoplasm"/>
    <property type="evidence" value="ECO:0007669"/>
    <property type="project" value="UniProtKB-SubCell"/>
</dbReference>
<dbReference type="GO" id="GO:0004017">
    <property type="term" value="F:adenylate kinase activity"/>
    <property type="evidence" value="ECO:0007669"/>
    <property type="project" value="UniProtKB-UniRule"/>
</dbReference>
<dbReference type="GO" id="GO:0005524">
    <property type="term" value="F:ATP binding"/>
    <property type="evidence" value="ECO:0007669"/>
    <property type="project" value="UniProtKB-UniRule"/>
</dbReference>
<dbReference type="GO" id="GO:0044209">
    <property type="term" value="P:AMP salvage"/>
    <property type="evidence" value="ECO:0007669"/>
    <property type="project" value="UniProtKB-UniRule"/>
</dbReference>
<dbReference type="CDD" id="cd01428">
    <property type="entry name" value="ADK"/>
    <property type="match status" value="1"/>
</dbReference>
<dbReference type="FunFam" id="3.40.50.300:FF:000106">
    <property type="entry name" value="Adenylate kinase mitochondrial"/>
    <property type="match status" value="1"/>
</dbReference>
<dbReference type="Gene3D" id="3.40.50.300">
    <property type="entry name" value="P-loop containing nucleotide triphosphate hydrolases"/>
    <property type="match status" value="1"/>
</dbReference>
<dbReference type="HAMAP" id="MF_00235">
    <property type="entry name" value="Adenylate_kinase_Adk"/>
    <property type="match status" value="1"/>
</dbReference>
<dbReference type="InterPro" id="IPR006259">
    <property type="entry name" value="Adenyl_kin_sub"/>
</dbReference>
<dbReference type="InterPro" id="IPR000850">
    <property type="entry name" value="Adenylat/UMP-CMP_kin"/>
</dbReference>
<dbReference type="InterPro" id="IPR033690">
    <property type="entry name" value="Adenylat_kinase_CS"/>
</dbReference>
<dbReference type="InterPro" id="IPR007862">
    <property type="entry name" value="Adenylate_kinase_lid-dom"/>
</dbReference>
<dbReference type="InterPro" id="IPR027417">
    <property type="entry name" value="P-loop_NTPase"/>
</dbReference>
<dbReference type="NCBIfam" id="TIGR01351">
    <property type="entry name" value="adk"/>
    <property type="match status" value="1"/>
</dbReference>
<dbReference type="NCBIfam" id="NF001379">
    <property type="entry name" value="PRK00279.1-1"/>
    <property type="match status" value="1"/>
</dbReference>
<dbReference type="NCBIfam" id="NF001380">
    <property type="entry name" value="PRK00279.1-2"/>
    <property type="match status" value="1"/>
</dbReference>
<dbReference type="NCBIfam" id="NF001381">
    <property type="entry name" value="PRK00279.1-3"/>
    <property type="match status" value="1"/>
</dbReference>
<dbReference type="PANTHER" id="PTHR23359">
    <property type="entry name" value="NUCLEOTIDE KINASE"/>
    <property type="match status" value="1"/>
</dbReference>
<dbReference type="Pfam" id="PF00406">
    <property type="entry name" value="ADK"/>
    <property type="match status" value="1"/>
</dbReference>
<dbReference type="Pfam" id="PF05191">
    <property type="entry name" value="ADK_lid"/>
    <property type="match status" value="1"/>
</dbReference>
<dbReference type="PRINTS" id="PR00094">
    <property type="entry name" value="ADENYLTKNASE"/>
</dbReference>
<dbReference type="SUPFAM" id="SSF52540">
    <property type="entry name" value="P-loop containing nucleoside triphosphate hydrolases"/>
    <property type="match status" value="1"/>
</dbReference>
<dbReference type="PROSITE" id="PS00113">
    <property type="entry name" value="ADENYLATE_KINASE"/>
    <property type="match status" value="1"/>
</dbReference>
<feature type="chain" id="PRO_0000158810" description="Adenylate kinase">
    <location>
        <begin position="1"/>
        <end position="215"/>
    </location>
</feature>
<feature type="region of interest" description="NMP" evidence="1">
    <location>
        <begin position="30"/>
        <end position="59"/>
    </location>
</feature>
<feature type="region of interest" description="LID" evidence="1">
    <location>
        <begin position="122"/>
        <end position="159"/>
    </location>
</feature>
<feature type="binding site" evidence="1">
    <location>
        <begin position="10"/>
        <end position="15"/>
    </location>
    <ligand>
        <name>ATP</name>
        <dbReference type="ChEBI" id="CHEBI:30616"/>
    </ligand>
</feature>
<feature type="binding site" evidence="1">
    <location>
        <position position="31"/>
    </location>
    <ligand>
        <name>AMP</name>
        <dbReference type="ChEBI" id="CHEBI:456215"/>
    </ligand>
</feature>
<feature type="binding site" evidence="1">
    <location>
        <position position="36"/>
    </location>
    <ligand>
        <name>AMP</name>
        <dbReference type="ChEBI" id="CHEBI:456215"/>
    </ligand>
</feature>
<feature type="binding site" evidence="1">
    <location>
        <begin position="57"/>
        <end position="59"/>
    </location>
    <ligand>
        <name>AMP</name>
        <dbReference type="ChEBI" id="CHEBI:456215"/>
    </ligand>
</feature>
<feature type="binding site" evidence="1">
    <location>
        <begin position="85"/>
        <end position="88"/>
    </location>
    <ligand>
        <name>AMP</name>
        <dbReference type="ChEBI" id="CHEBI:456215"/>
    </ligand>
</feature>
<feature type="binding site" evidence="1">
    <location>
        <position position="92"/>
    </location>
    <ligand>
        <name>AMP</name>
        <dbReference type="ChEBI" id="CHEBI:456215"/>
    </ligand>
</feature>
<feature type="binding site" evidence="1">
    <location>
        <position position="123"/>
    </location>
    <ligand>
        <name>ATP</name>
        <dbReference type="ChEBI" id="CHEBI:30616"/>
    </ligand>
</feature>
<feature type="binding site" evidence="1">
    <location>
        <begin position="132"/>
        <end position="133"/>
    </location>
    <ligand>
        <name>ATP</name>
        <dbReference type="ChEBI" id="CHEBI:30616"/>
    </ligand>
</feature>
<feature type="binding site" evidence="1">
    <location>
        <position position="156"/>
    </location>
    <ligand>
        <name>AMP</name>
        <dbReference type="ChEBI" id="CHEBI:456215"/>
    </ligand>
</feature>
<feature type="binding site" evidence="1">
    <location>
        <position position="167"/>
    </location>
    <ligand>
        <name>AMP</name>
        <dbReference type="ChEBI" id="CHEBI:456215"/>
    </ligand>
</feature>
<feature type="binding site" evidence="1">
    <location>
        <position position="200"/>
    </location>
    <ligand>
        <name>ATP</name>
        <dbReference type="ChEBI" id="CHEBI:30616"/>
    </ligand>
</feature>
<comment type="function">
    <text evidence="1">Catalyzes the reversible transfer of the terminal phosphate group between ATP and AMP. Plays an important role in cellular energy homeostasis and in adenine nucleotide metabolism.</text>
</comment>
<comment type="catalytic activity">
    <reaction evidence="1">
        <text>AMP + ATP = 2 ADP</text>
        <dbReference type="Rhea" id="RHEA:12973"/>
        <dbReference type="ChEBI" id="CHEBI:30616"/>
        <dbReference type="ChEBI" id="CHEBI:456215"/>
        <dbReference type="ChEBI" id="CHEBI:456216"/>
        <dbReference type="EC" id="2.7.4.3"/>
    </reaction>
</comment>
<comment type="pathway">
    <text evidence="1">Purine metabolism; AMP biosynthesis via salvage pathway; AMP from ADP: step 1/1.</text>
</comment>
<comment type="subunit">
    <text evidence="1">Monomer.</text>
</comment>
<comment type="subcellular location">
    <subcellularLocation>
        <location evidence="1">Cytoplasm</location>
    </subcellularLocation>
</comment>
<comment type="domain">
    <text evidence="1">Consists of three domains, a large central CORE domain and two small peripheral domains, NMPbind and LID, which undergo movements during catalysis. The LID domain closes over the site of phosphoryl transfer upon ATP binding. Assembling and dissambling the active center during each catalytic cycle provides an effective means to prevent ATP hydrolysis.</text>
</comment>
<comment type="similarity">
    <text evidence="1">Belongs to the adenylate kinase family.</text>
</comment>
<organism>
    <name type="scientific">Neisseria gonorrhoeae</name>
    <dbReference type="NCBI Taxonomy" id="485"/>
    <lineage>
        <taxon>Bacteria</taxon>
        <taxon>Pseudomonadati</taxon>
        <taxon>Pseudomonadota</taxon>
        <taxon>Betaproteobacteria</taxon>
        <taxon>Neisseriales</taxon>
        <taxon>Neisseriaceae</taxon>
        <taxon>Neisseria</taxon>
    </lineage>
</organism>
<reference key="1">
    <citation type="journal article" date="1995" name="Mol. Microbiol.">
        <title>Interspecies recombination in nature: a meningococcus that has acquired a gonococcal PIB porin.</title>
        <authorList>
            <person name="Vazquez J.A."/>
            <person name="Berron S."/>
            <person name="O'Rourke M."/>
            <person name="Carpenter G."/>
            <person name="Feil E."/>
            <person name="Smith N.H."/>
            <person name="Spratt B.G."/>
        </authorList>
    </citation>
    <scope>NUCLEOTIDE SEQUENCE [GENOMIC DNA]</scope>
    <source>
        <strain>CH95</strain>
    </source>
</reference>
<sequence length="215" mass="23124">MKALLLGAPGAGKGTQAQFITAAFGIPQISTGDMLRAAIKAGTPLGLEAKKIIDEGGLVRDDIIIGMVKERIAQDDCKNGFLFDGFPRTLAQAEAMVEAGVGLDAVVEIDVSDSVIVDRMSGRRVHLASGRTYHVTYNPPKTEGKDDVTGEDLIQRDDDKEETVKKRLAVYHEQTEVLVDFYSKLEGEHAPKYIKVDGTQAVEAVKAEVLGALGK</sequence>
<proteinExistence type="inferred from homology"/>
<protein>
    <recommendedName>
        <fullName evidence="1">Adenylate kinase</fullName>
        <shortName evidence="1">AK</shortName>
        <ecNumber evidence="1">2.7.4.3</ecNumber>
    </recommendedName>
    <alternativeName>
        <fullName evidence="1">ATP-AMP transphosphorylase</fullName>
    </alternativeName>
    <alternativeName>
        <fullName evidence="1">ATP:AMP phosphotransferase</fullName>
    </alternativeName>
    <alternativeName>
        <fullName evidence="1">Adenylate monophosphate kinase</fullName>
    </alternativeName>
</protein>